<evidence type="ECO:0000255" key="1">
    <source>
        <dbReference type="HAMAP-Rule" id="MF_00075"/>
    </source>
</evidence>
<dbReference type="EMBL" id="CP000446">
    <property type="protein sequence ID" value="ABI38725.1"/>
    <property type="molecule type" value="Genomic_DNA"/>
</dbReference>
<dbReference type="RefSeq" id="WP_006081934.1">
    <property type="nucleotide sequence ID" value="NC_008321.1"/>
</dbReference>
<dbReference type="SMR" id="Q0HJP2"/>
<dbReference type="GeneID" id="94727745"/>
<dbReference type="KEGG" id="she:Shewmr4_1649"/>
<dbReference type="HOGENOM" id="CLU_151267_1_0_6"/>
<dbReference type="GO" id="GO:0005829">
    <property type="term" value="C:cytosol"/>
    <property type="evidence" value="ECO:0007669"/>
    <property type="project" value="TreeGrafter"/>
</dbReference>
<dbReference type="GO" id="GO:0043022">
    <property type="term" value="F:ribosome binding"/>
    <property type="evidence" value="ECO:0007669"/>
    <property type="project" value="UniProtKB-UniRule"/>
</dbReference>
<dbReference type="GO" id="GO:0019843">
    <property type="term" value="F:rRNA binding"/>
    <property type="evidence" value="ECO:0007669"/>
    <property type="project" value="UniProtKB-UniRule"/>
</dbReference>
<dbReference type="GO" id="GO:0003743">
    <property type="term" value="F:translation initiation factor activity"/>
    <property type="evidence" value="ECO:0007669"/>
    <property type="project" value="UniProtKB-UniRule"/>
</dbReference>
<dbReference type="CDD" id="cd04451">
    <property type="entry name" value="S1_IF1"/>
    <property type="match status" value="1"/>
</dbReference>
<dbReference type="FunFam" id="2.40.50.140:FF:000002">
    <property type="entry name" value="Translation initiation factor IF-1"/>
    <property type="match status" value="1"/>
</dbReference>
<dbReference type="Gene3D" id="2.40.50.140">
    <property type="entry name" value="Nucleic acid-binding proteins"/>
    <property type="match status" value="1"/>
</dbReference>
<dbReference type="HAMAP" id="MF_00075">
    <property type="entry name" value="IF_1"/>
    <property type="match status" value="1"/>
</dbReference>
<dbReference type="InterPro" id="IPR012340">
    <property type="entry name" value="NA-bd_OB-fold"/>
</dbReference>
<dbReference type="InterPro" id="IPR006196">
    <property type="entry name" value="RNA-binding_domain_S1_IF1"/>
</dbReference>
<dbReference type="InterPro" id="IPR003029">
    <property type="entry name" value="S1_domain"/>
</dbReference>
<dbReference type="InterPro" id="IPR004368">
    <property type="entry name" value="TIF_IF1"/>
</dbReference>
<dbReference type="NCBIfam" id="TIGR00008">
    <property type="entry name" value="infA"/>
    <property type="match status" value="1"/>
</dbReference>
<dbReference type="PANTHER" id="PTHR33370">
    <property type="entry name" value="TRANSLATION INITIATION FACTOR IF-1, CHLOROPLASTIC"/>
    <property type="match status" value="1"/>
</dbReference>
<dbReference type="PANTHER" id="PTHR33370:SF1">
    <property type="entry name" value="TRANSLATION INITIATION FACTOR IF-1, CHLOROPLASTIC"/>
    <property type="match status" value="1"/>
</dbReference>
<dbReference type="Pfam" id="PF01176">
    <property type="entry name" value="eIF-1a"/>
    <property type="match status" value="1"/>
</dbReference>
<dbReference type="SMART" id="SM00316">
    <property type="entry name" value="S1"/>
    <property type="match status" value="1"/>
</dbReference>
<dbReference type="SUPFAM" id="SSF50249">
    <property type="entry name" value="Nucleic acid-binding proteins"/>
    <property type="match status" value="1"/>
</dbReference>
<dbReference type="PROSITE" id="PS50832">
    <property type="entry name" value="S1_IF1_TYPE"/>
    <property type="match status" value="1"/>
</dbReference>
<comment type="function">
    <text evidence="1">One of the essential components for the initiation of protein synthesis. Stabilizes the binding of IF-2 and IF-3 on the 30S subunit to which N-formylmethionyl-tRNA(fMet) subsequently binds. Helps modulate mRNA selection, yielding the 30S pre-initiation complex (PIC). Upon addition of the 50S ribosomal subunit IF-1, IF-2 and IF-3 are released leaving the mature 70S translation initiation complex.</text>
</comment>
<comment type="subunit">
    <text evidence="1">Component of the 30S ribosomal translation pre-initiation complex which assembles on the 30S ribosome in the order IF-2 and IF-3, IF-1 and N-formylmethionyl-tRNA(fMet); mRNA recruitment can occur at any time during PIC assembly.</text>
</comment>
<comment type="subcellular location">
    <subcellularLocation>
        <location evidence="1">Cytoplasm</location>
    </subcellularLocation>
</comment>
<comment type="similarity">
    <text evidence="1">Belongs to the IF-1 family.</text>
</comment>
<feature type="chain" id="PRO_0000263868" description="Translation initiation factor IF-1">
    <location>
        <begin position="1"/>
        <end position="72"/>
    </location>
</feature>
<feature type="domain" description="S1-like" evidence="1">
    <location>
        <begin position="1"/>
        <end position="72"/>
    </location>
</feature>
<gene>
    <name evidence="1" type="primary">infA</name>
    <name type="ordered locus">Shewmr4_1649</name>
</gene>
<keyword id="KW-0963">Cytoplasm</keyword>
<keyword id="KW-0396">Initiation factor</keyword>
<keyword id="KW-0648">Protein biosynthesis</keyword>
<keyword id="KW-0694">RNA-binding</keyword>
<keyword id="KW-0699">rRNA-binding</keyword>
<protein>
    <recommendedName>
        <fullName evidence="1">Translation initiation factor IF-1</fullName>
    </recommendedName>
</protein>
<name>IF1_SHESM</name>
<accession>Q0HJP2</accession>
<reference key="1">
    <citation type="submission" date="2006-08" db="EMBL/GenBank/DDBJ databases">
        <title>Complete sequence of Shewanella sp. MR-4.</title>
        <authorList>
            <consortium name="US DOE Joint Genome Institute"/>
            <person name="Copeland A."/>
            <person name="Lucas S."/>
            <person name="Lapidus A."/>
            <person name="Barry K."/>
            <person name="Detter J.C."/>
            <person name="Glavina del Rio T."/>
            <person name="Hammon N."/>
            <person name="Israni S."/>
            <person name="Dalin E."/>
            <person name="Tice H."/>
            <person name="Pitluck S."/>
            <person name="Kiss H."/>
            <person name="Brettin T."/>
            <person name="Bruce D."/>
            <person name="Han C."/>
            <person name="Tapia R."/>
            <person name="Gilna P."/>
            <person name="Schmutz J."/>
            <person name="Larimer F."/>
            <person name="Land M."/>
            <person name="Hauser L."/>
            <person name="Kyrpides N."/>
            <person name="Mikhailova N."/>
            <person name="Nealson K."/>
            <person name="Konstantinidis K."/>
            <person name="Klappenbach J."/>
            <person name="Tiedje J."/>
            <person name="Richardson P."/>
        </authorList>
    </citation>
    <scope>NUCLEOTIDE SEQUENCE [LARGE SCALE GENOMIC DNA]</scope>
    <source>
        <strain>MR-4</strain>
    </source>
</reference>
<organism>
    <name type="scientific">Shewanella sp. (strain MR-4)</name>
    <dbReference type="NCBI Taxonomy" id="60480"/>
    <lineage>
        <taxon>Bacteria</taxon>
        <taxon>Pseudomonadati</taxon>
        <taxon>Pseudomonadota</taxon>
        <taxon>Gammaproteobacteria</taxon>
        <taxon>Alteromonadales</taxon>
        <taxon>Shewanellaceae</taxon>
        <taxon>Shewanella</taxon>
    </lineage>
</organism>
<proteinExistence type="inferred from homology"/>
<sequence length="72" mass="8273">MAKEDNIEMQGTILETLPNTMFRVELENGHVVIAHISGKMRKNYIRILTGDKVTVQLTPYDLTKGRIVFRAR</sequence>